<comment type="function">
    <text evidence="1">Phosphorylation of dTMP to form dTDP in both de novo and salvage pathways of dTTP synthesis.</text>
</comment>
<comment type="catalytic activity">
    <reaction evidence="1">
        <text>dTMP + ATP = dTDP + ADP</text>
        <dbReference type="Rhea" id="RHEA:13517"/>
        <dbReference type="ChEBI" id="CHEBI:30616"/>
        <dbReference type="ChEBI" id="CHEBI:58369"/>
        <dbReference type="ChEBI" id="CHEBI:63528"/>
        <dbReference type="ChEBI" id="CHEBI:456216"/>
        <dbReference type="EC" id="2.7.4.9"/>
    </reaction>
</comment>
<comment type="similarity">
    <text evidence="1">Belongs to the thymidylate kinase family.</text>
</comment>
<evidence type="ECO:0000255" key="1">
    <source>
        <dbReference type="HAMAP-Rule" id="MF_00165"/>
    </source>
</evidence>
<feature type="chain" id="PRO_1000123550" description="Thymidylate kinase">
    <location>
        <begin position="1"/>
        <end position="210"/>
    </location>
</feature>
<feature type="binding site" evidence="1">
    <location>
        <begin position="10"/>
        <end position="17"/>
    </location>
    <ligand>
        <name>ATP</name>
        <dbReference type="ChEBI" id="CHEBI:30616"/>
    </ligand>
</feature>
<accession>A6VQH1</accession>
<protein>
    <recommendedName>
        <fullName evidence="1">Thymidylate kinase</fullName>
        <ecNumber evidence="1">2.7.4.9</ecNumber>
    </recommendedName>
    <alternativeName>
        <fullName evidence="1">dTMP kinase</fullName>
    </alternativeName>
</protein>
<proteinExistence type="inferred from homology"/>
<gene>
    <name evidence="1" type="primary">tmk</name>
    <name type="ordered locus">Asuc_1867</name>
</gene>
<keyword id="KW-0067">ATP-binding</keyword>
<keyword id="KW-0418">Kinase</keyword>
<keyword id="KW-0545">Nucleotide biosynthesis</keyword>
<keyword id="KW-0547">Nucleotide-binding</keyword>
<keyword id="KW-1185">Reference proteome</keyword>
<keyword id="KW-0808">Transferase</keyword>
<reference key="1">
    <citation type="journal article" date="2010" name="BMC Genomics">
        <title>A genomic perspective on the potential of Actinobacillus succinogenes for industrial succinate production.</title>
        <authorList>
            <person name="McKinlay J.B."/>
            <person name="Laivenieks M."/>
            <person name="Schindler B.D."/>
            <person name="McKinlay A.A."/>
            <person name="Siddaramappa S."/>
            <person name="Challacombe J.F."/>
            <person name="Lowry S.R."/>
            <person name="Clum A."/>
            <person name="Lapidus A.L."/>
            <person name="Burkhart K.B."/>
            <person name="Harkins V."/>
            <person name="Vieille C."/>
        </authorList>
    </citation>
    <scope>NUCLEOTIDE SEQUENCE [LARGE SCALE GENOMIC DNA]</scope>
    <source>
        <strain>ATCC 55618 / DSM 22257 / CCUG 43843 / 130Z</strain>
    </source>
</reference>
<name>KTHY_ACTSZ</name>
<dbReference type="EC" id="2.7.4.9" evidence="1"/>
<dbReference type="EMBL" id="CP000746">
    <property type="protein sequence ID" value="ABR75218.1"/>
    <property type="molecule type" value="Genomic_DNA"/>
</dbReference>
<dbReference type="RefSeq" id="WP_012073595.1">
    <property type="nucleotide sequence ID" value="NC_009655.1"/>
</dbReference>
<dbReference type="SMR" id="A6VQH1"/>
<dbReference type="STRING" id="339671.Asuc_1867"/>
<dbReference type="KEGG" id="asu:Asuc_1867"/>
<dbReference type="eggNOG" id="COG0125">
    <property type="taxonomic scope" value="Bacteria"/>
</dbReference>
<dbReference type="HOGENOM" id="CLU_049131_0_1_6"/>
<dbReference type="OrthoDB" id="9774907at2"/>
<dbReference type="Proteomes" id="UP000001114">
    <property type="component" value="Chromosome"/>
</dbReference>
<dbReference type="GO" id="GO:0005829">
    <property type="term" value="C:cytosol"/>
    <property type="evidence" value="ECO:0007669"/>
    <property type="project" value="TreeGrafter"/>
</dbReference>
<dbReference type="GO" id="GO:0005524">
    <property type="term" value="F:ATP binding"/>
    <property type="evidence" value="ECO:0007669"/>
    <property type="project" value="UniProtKB-UniRule"/>
</dbReference>
<dbReference type="GO" id="GO:0004798">
    <property type="term" value="F:dTMP kinase activity"/>
    <property type="evidence" value="ECO:0007669"/>
    <property type="project" value="UniProtKB-UniRule"/>
</dbReference>
<dbReference type="GO" id="GO:0006233">
    <property type="term" value="P:dTDP biosynthetic process"/>
    <property type="evidence" value="ECO:0007669"/>
    <property type="project" value="InterPro"/>
</dbReference>
<dbReference type="GO" id="GO:0006235">
    <property type="term" value="P:dTTP biosynthetic process"/>
    <property type="evidence" value="ECO:0007669"/>
    <property type="project" value="UniProtKB-UniRule"/>
</dbReference>
<dbReference type="GO" id="GO:0006227">
    <property type="term" value="P:dUDP biosynthetic process"/>
    <property type="evidence" value="ECO:0007669"/>
    <property type="project" value="TreeGrafter"/>
</dbReference>
<dbReference type="CDD" id="cd01672">
    <property type="entry name" value="TMPK"/>
    <property type="match status" value="1"/>
</dbReference>
<dbReference type="FunFam" id="3.40.50.300:FF:000321">
    <property type="entry name" value="Thymidylate kinase"/>
    <property type="match status" value="1"/>
</dbReference>
<dbReference type="Gene3D" id="3.40.50.300">
    <property type="entry name" value="P-loop containing nucleotide triphosphate hydrolases"/>
    <property type="match status" value="1"/>
</dbReference>
<dbReference type="HAMAP" id="MF_00165">
    <property type="entry name" value="Thymidylate_kinase"/>
    <property type="match status" value="1"/>
</dbReference>
<dbReference type="InterPro" id="IPR027417">
    <property type="entry name" value="P-loop_NTPase"/>
</dbReference>
<dbReference type="InterPro" id="IPR039430">
    <property type="entry name" value="Thymidylate_kin-like_dom"/>
</dbReference>
<dbReference type="InterPro" id="IPR018095">
    <property type="entry name" value="Thymidylate_kin_CS"/>
</dbReference>
<dbReference type="InterPro" id="IPR018094">
    <property type="entry name" value="Thymidylate_kinase"/>
</dbReference>
<dbReference type="NCBIfam" id="TIGR00041">
    <property type="entry name" value="DTMP_kinase"/>
    <property type="match status" value="1"/>
</dbReference>
<dbReference type="PANTHER" id="PTHR10344">
    <property type="entry name" value="THYMIDYLATE KINASE"/>
    <property type="match status" value="1"/>
</dbReference>
<dbReference type="PANTHER" id="PTHR10344:SF4">
    <property type="entry name" value="UMP-CMP KINASE 2, MITOCHONDRIAL"/>
    <property type="match status" value="1"/>
</dbReference>
<dbReference type="Pfam" id="PF02223">
    <property type="entry name" value="Thymidylate_kin"/>
    <property type="match status" value="1"/>
</dbReference>
<dbReference type="SUPFAM" id="SSF52540">
    <property type="entry name" value="P-loop containing nucleoside triphosphate hydrolases"/>
    <property type="match status" value="1"/>
</dbReference>
<dbReference type="PROSITE" id="PS01331">
    <property type="entry name" value="THYMIDYLATE_KINASE"/>
    <property type="match status" value="1"/>
</dbReference>
<organism>
    <name type="scientific">Actinobacillus succinogenes (strain ATCC 55618 / DSM 22257 / CCUG 43843 / 130Z)</name>
    <dbReference type="NCBI Taxonomy" id="339671"/>
    <lineage>
        <taxon>Bacteria</taxon>
        <taxon>Pseudomonadati</taxon>
        <taxon>Pseudomonadota</taxon>
        <taxon>Gammaproteobacteria</taxon>
        <taxon>Pasteurellales</taxon>
        <taxon>Pasteurellaceae</taxon>
        <taxon>Actinobacillus</taxon>
    </lineage>
</organism>
<sequence length="210" mass="23362">MKGKFIVLEGLEGAGKTTALHTVVEQLRSLGITDLVFTREPGGTPLAEKLRQLIKHETEEPVTDKAELLMLYAARIQLVENVIKPALAAGKWVIGDRHDLSSQAYQGGGRGLDRHFMQTLKDSVLGGFEPDFTLYLDIEPAEGLARARGRGELDRIEQAGLDFFNRTRTRYLELVRDNPKAVVINARQNIERVTADIQSAVKKFVESQHG</sequence>